<organism>
    <name type="scientific">Blepharisma musculus</name>
    <dbReference type="NCBI Taxonomy" id="197864"/>
    <lineage>
        <taxon>Eukaryota</taxon>
        <taxon>Sar</taxon>
        <taxon>Alveolata</taxon>
        <taxon>Ciliophora</taxon>
        <taxon>Postciliodesmatophora</taxon>
        <taxon>Heterotrichea</taxon>
        <taxon>Heterotrichida</taxon>
        <taxon>Blepharismidae</taxon>
        <taxon>Blepharisma</taxon>
    </lineage>
</organism>
<gene>
    <name type="primary">eRF1</name>
</gene>
<proteinExistence type="evidence at transcript level"/>
<comment type="function">
    <text>Directs the termination of nascent peptide synthesis (translation) in response to the termination codons UAA and UAG. In B.musculus UGA codes for tryptophan.</text>
</comment>
<comment type="subunit">
    <text evidence="1">Heterodimer of two subunits, one of which binds GTP.</text>
</comment>
<comment type="subcellular location">
    <subcellularLocation>
        <location evidence="1">Cytoplasm</location>
    </subcellularLocation>
</comment>
<comment type="similarity">
    <text evidence="2">Belongs to the eukaryotic release factor 1 family.</text>
</comment>
<accession>Q5CD95</accession>
<name>ERF1_BLEMU</name>
<feature type="chain" id="PRO_0000143147" description="Eukaryotic peptide chain release factor subunit 1">
    <location>
        <begin position="1"/>
        <end position="436"/>
    </location>
</feature>
<sequence>MEGDELTQNIEQWKIKRLIDNLDKARGNGTSLISLIIPPREQLPIINKMITEEYGKSSNIKSRIVRQAVQSALTSTKERLKLYNNRLPANGLILYCGEVINEEGVCEKKYTIDFQPYRAINTTLYICDNKFHTQPLKDLLVMDDKFGFIIIDGNGALFGTLQGNTREVLHKFSVDLPKKHRRGGQSALRFSRLRMESRNNYLRKVAEQSVVQFISNDKVNVAGLIIAGSAEFKNVLVQSDLFDQRLAAKVLKIVDVAYGGENGFTQAIELSADTLSNIKFIREKKVMSKFFEEVAQDTKKYCYGVEDTMRSLIMGAIEVILLFENLNFTRYVLKNPTTGAEKTLYLTPEQEENHDNFMENGEELEALEKGPLPEWIVDNYMKFGAGLEFITDRSQEGAQFVRGFGGLGAFLRYQVDMAHLNAGEEELDEEWDDDFM</sequence>
<dbReference type="EMBL" id="AB086370">
    <property type="protein sequence ID" value="BAD90945.1"/>
    <property type="molecule type" value="mRNA"/>
</dbReference>
<dbReference type="SMR" id="Q5CD95"/>
<dbReference type="GO" id="GO:0005737">
    <property type="term" value="C:cytoplasm"/>
    <property type="evidence" value="ECO:0007669"/>
    <property type="project" value="UniProtKB-SubCell"/>
</dbReference>
<dbReference type="GO" id="GO:0003747">
    <property type="term" value="F:translation release factor activity"/>
    <property type="evidence" value="ECO:0007669"/>
    <property type="project" value="InterPro"/>
</dbReference>
<dbReference type="FunFam" id="3.30.1330.30:FF:000006">
    <property type="entry name" value="Peptide chain release factor subunit 1"/>
    <property type="match status" value="1"/>
</dbReference>
<dbReference type="FunFam" id="3.30.420.60:FF:000003">
    <property type="entry name" value="Peptide chain release factor subunit 1"/>
    <property type="match status" value="1"/>
</dbReference>
<dbReference type="Gene3D" id="3.30.1330.30">
    <property type="match status" value="1"/>
</dbReference>
<dbReference type="Gene3D" id="3.30.960.10">
    <property type="entry name" value="eRF1 domain 1"/>
    <property type="match status" value="1"/>
</dbReference>
<dbReference type="Gene3D" id="3.30.420.60">
    <property type="entry name" value="eRF1 domain 2"/>
    <property type="match status" value="1"/>
</dbReference>
<dbReference type="InterPro" id="IPR042226">
    <property type="entry name" value="eFR1_2_sf"/>
</dbReference>
<dbReference type="InterPro" id="IPR005140">
    <property type="entry name" value="eRF1_1_Pelota"/>
</dbReference>
<dbReference type="InterPro" id="IPR024049">
    <property type="entry name" value="eRF1_1_sf"/>
</dbReference>
<dbReference type="InterPro" id="IPR005141">
    <property type="entry name" value="eRF1_2"/>
</dbReference>
<dbReference type="InterPro" id="IPR005142">
    <property type="entry name" value="eRF1_3"/>
</dbReference>
<dbReference type="InterPro" id="IPR004403">
    <property type="entry name" value="Peptide_chain-rel_eRF1/aRF1"/>
</dbReference>
<dbReference type="InterPro" id="IPR029064">
    <property type="entry name" value="Ribosomal_eL30-like_sf"/>
</dbReference>
<dbReference type="NCBIfam" id="TIGR03676">
    <property type="entry name" value="aRF1_eRF1"/>
    <property type="match status" value="1"/>
</dbReference>
<dbReference type="PANTHER" id="PTHR10113">
    <property type="entry name" value="PEPTIDE CHAIN RELEASE FACTOR SUBUNIT 1"/>
    <property type="match status" value="1"/>
</dbReference>
<dbReference type="Pfam" id="PF03463">
    <property type="entry name" value="eRF1_1"/>
    <property type="match status" value="1"/>
</dbReference>
<dbReference type="Pfam" id="PF03464">
    <property type="entry name" value="eRF1_2"/>
    <property type="match status" value="1"/>
</dbReference>
<dbReference type="Pfam" id="PF03465">
    <property type="entry name" value="eRF1_3"/>
    <property type="match status" value="1"/>
</dbReference>
<dbReference type="SMART" id="SM01194">
    <property type="entry name" value="eRF1_1"/>
    <property type="match status" value="1"/>
</dbReference>
<dbReference type="SUPFAM" id="SSF55315">
    <property type="entry name" value="L30e-like"/>
    <property type="match status" value="1"/>
</dbReference>
<dbReference type="SUPFAM" id="SSF55481">
    <property type="entry name" value="N-terminal domain of eukaryotic peptide chain release factor subunit 1, ERF1"/>
    <property type="match status" value="1"/>
</dbReference>
<dbReference type="SUPFAM" id="SSF53137">
    <property type="entry name" value="Translational machinery components"/>
    <property type="match status" value="1"/>
</dbReference>
<evidence type="ECO:0000250" key="1"/>
<evidence type="ECO:0000305" key="2"/>
<keyword id="KW-0963">Cytoplasm</keyword>
<keyword id="KW-0648">Protein biosynthesis</keyword>
<reference key="1">
    <citation type="journal article" date="2005" name="Gene">
        <title>Newly sequenced eRF1s from ciliates: the diversity of stop codon usage and the molecular surfaces that are important for stop codon interactions.</title>
        <authorList>
            <person name="Kim O.T.P."/>
            <person name="Yura K."/>
            <person name="Go N."/>
            <person name="Harumoto T."/>
        </authorList>
    </citation>
    <scope>NUCLEOTIDE SEQUENCE [MRNA]</scope>
    <source>
        <strain>Stock Lenin</strain>
    </source>
</reference>
<protein>
    <recommendedName>
        <fullName>Eukaryotic peptide chain release factor subunit 1</fullName>
        <shortName>Eukaryotic release factor 1</shortName>
        <shortName>eRF1</shortName>
    </recommendedName>
</protein>